<dbReference type="EMBL" id="CP000875">
    <property type="protein sequence ID" value="ABX06164.1"/>
    <property type="molecule type" value="Genomic_DNA"/>
</dbReference>
<dbReference type="SMR" id="A9B527"/>
<dbReference type="FunCoup" id="A9B527">
    <property type="interactions" value="550"/>
</dbReference>
<dbReference type="STRING" id="316274.Haur_3528"/>
<dbReference type="KEGG" id="hau:Haur_3528"/>
<dbReference type="eggNOG" id="COG0359">
    <property type="taxonomic scope" value="Bacteria"/>
</dbReference>
<dbReference type="HOGENOM" id="CLU_078938_3_0_0"/>
<dbReference type="InParanoid" id="A9B527"/>
<dbReference type="Proteomes" id="UP000000787">
    <property type="component" value="Chromosome"/>
</dbReference>
<dbReference type="GO" id="GO:1990904">
    <property type="term" value="C:ribonucleoprotein complex"/>
    <property type="evidence" value="ECO:0007669"/>
    <property type="project" value="UniProtKB-KW"/>
</dbReference>
<dbReference type="GO" id="GO:0005840">
    <property type="term" value="C:ribosome"/>
    <property type="evidence" value="ECO:0007669"/>
    <property type="project" value="UniProtKB-KW"/>
</dbReference>
<dbReference type="GO" id="GO:0019843">
    <property type="term" value="F:rRNA binding"/>
    <property type="evidence" value="ECO:0007669"/>
    <property type="project" value="UniProtKB-UniRule"/>
</dbReference>
<dbReference type="GO" id="GO:0003735">
    <property type="term" value="F:structural constituent of ribosome"/>
    <property type="evidence" value="ECO:0007669"/>
    <property type="project" value="InterPro"/>
</dbReference>
<dbReference type="GO" id="GO:0006412">
    <property type="term" value="P:translation"/>
    <property type="evidence" value="ECO:0007669"/>
    <property type="project" value="UniProtKB-UniRule"/>
</dbReference>
<dbReference type="Gene3D" id="3.10.430.100">
    <property type="entry name" value="Ribosomal protein L9, C-terminal domain"/>
    <property type="match status" value="1"/>
</dbReference>
<dbReference type="Gene3D" id="3.40.5.10">
    <property type="entry name" value="Ribosomal protein L9, N-terminal domain"/>
    <property type="match status" value="1"/>
</dbReference>
<dbReference type="HAMAP" id="MF_00503">
    <property type="entry name" value="Ribosomal_bL9"/>
    <property type="match status" value="1"/>
</dbReference>
<dbReference type="InterPro" id="IPR000244">
    <property type="entry name" value="Ribosomal_bL9"/>
</dbReference>
<dbReference type="InterPro" id="IPR009027">
    <property type="entry name" value="Ribosomal_bL9/RNase_H1_N"/>
</dbReference>
<dbReference type="InterPro" id="IPR020594">
    <property type="entry name" value="Ribosomal_bL9_bac/chp"/>
</dbReference>
<dbReference type="InterPro" id="IPR020069">
    <property type="entry name" value="Ribosomal_bL9_C"/>
</dbReference>
<dbReference type="InterPro" id="IPR036791">
    <property type="entry name" value="Ribosomal_bL9_C_sf"/>
</dbReference>
<dbReference type="InterPro" id="IPR020070">
    <property type="entry name" value="Ribosomal_bL9_N"/>
</dbReference>
<dbReference type="InterPro" id="IPR036935">
    <property type="entry name" value="Ribosomal_bL9_N_sf"/>
</dbReference>
<dbReference type="NCBIfam" id="TIGR00158">
    <property type="entry name" value="L9"/>
    <property type="match status" value="1"/>
</dbReference>
<dbReference type="PANTHER" id="PTHR21368">
    <property type="entry name" value="50S RIBOSOMAL PROTEIN L9"/>
    <property type="match status" value="1"/>
</dbReference>
<dbReference type="Pfam" id="PF03948">
    <property type="entry name" value="Ribosomal_L9_C"/>
    <property type="match status" value="1"/>
</dbReference>
<dbReference type="Pfam" id="PF01281">
    <property type="entry name" value="Ribosomal_L9_N"/>
    <property type="match status" value="1"/>
</dbReference>
<dbReference type="SUPFAM" id="SSF55658">
    <property type="entry name" value="L9 N-domain-like"/>
    <property type="match status" value="1"/>
</dbReference>
<dbReference type="SUPFAM" id="SSF55653">
    <property type="entry name" value="Ribosomal protein L9 C-domain"/>
    <property type="match status" value="1"/>
</dbReference>
<dbReference type="PROSITE" id="PS00651">
    <property type="entry name" value="RIBOSOMAL_L9"/>
    <property type="match status" value="1"/>
</dbReference>
<gene>
    <name evidence="1" type="primary">rplI</name>
    <name type="ordered locus">Haur_3528</name>
</gene>
<reference key="1">
    <citation type="journal article" date="2011" name="Stand. Genomic Sci.">
        <title>Complete genome sequence of the filamentous gliding predatory bacterium Herpetosiphon aurantiacus type strain (114-95(T)).</title>
        <authorList>
            <person name="Kiss H."/>
            <person name="Nett M."/>
            <person name="Domin N."/>
            <person name="Martin K."/>
            <person name="Maresca J.A."/>
            <person name="Copeland A."/>
            <person name="Lapidus A."/>
            <person name="Lucas S."/>
            <person name="Berry K.W."/>
            <person name="Glavina Del Rio T."/>
            <person name="Dalin E."/>
            <person name="Tice H."/>
            <person name="Pitluck S."/>
            <person name="Richardson P."/>
            <person name="Bruce D."/>
            <person name="Goodwin L."/>
            <person name="Han C."/>
            <person name="Detter J.C."/>
            <person name="Schmutz J."/>
            <person name="Brettin T."/>
            <person name="Land M."/>
            <person name="Hauser L."/>
            <person name="Kyrpides N.C."/>
            <person name="Ivanova N."/>
            <person name="Goeker M."/>
            <person name="Woyke T."/>
            <person name="Klenk H.P."/>
            <person name="Bryant D.A."/>
        </authorList>
    </citation>
    <scope>NUCLEOTIDE SEQUENCE [LARGE SCALE GENOMIC DNA]</scope>
    <source>
        <strain>ATCC 23779 / DSM 785 / 114-95</strain>
    </source>
</reference>
<evidence type="ECO:0000255" key="1">
    <source>
        <dbReference type="HAMAP-Rule" id="MF_00503"/>
    </source>
</evidence>
<evidence type="ECO:0000256" key="2">
    <source>
        <dbReference type="SAM" id="MobiDB-lite"/>
    </source>
</evidence>
<evidence type="ECO:0000305" key="3"/>
<organism>
    <name type="scientific">Herpetosiphon aurantiacus (strain ATCC 23779 / DSM 785 / 114-95)</name>
    <dbReference type="NCBI Taxonomy" id="316274"/>
    <lineage>
        <taxon>Bacteria</taxon>
        <taxon>Bacillati</taxon>
        <taxon>Chloroflexota</taxon>
        <taxon>Chloroflexia</taxon>
        <taxon>Herpetosiphonales</taxon>
        <taxon>Herpetosiphonaceae</taxon>
        <taxon>Herpetosiphon</taxon>
    </lineage>
</organism>
<comment type="function">
    <text evidence="1">Binds to the 23S rRNA.</text>
</comment>
<comment type="similarity">
    <text evidence="1">Belongs to the bacterial ribosomal protein bL9 family.</text>
</comment>
<protein>
    <recommendedName>
        <fullName evidence="1">Large ribosomal subunit protein bL9</fullName>
    </recommendedName>
    <alternativeName>
        <fullName evidence="3">50S ribosomal protein L9</fullName>
    </alternativeName>
</protein>
<name>RL9_HERA2</name>
<feature type="chain" id="PRO_1000126925" description="Large ribosomal subunit protein bL9">
    <location>
        <begin position="1"/>
        <end position="168"/>
    </location>
</feature>
<feature type="region of interest" description="Disordered" evidence="2">
    <location>
        <begin position="148"/>
        <end position="168"/>
    </location>
</feature>
<feature type="compositionally biased region" description="Low complexity" evidence="2">
    <location>
        <begin position="157"/>
        <end position="168"/>
    </location>
</feature>
<accession>A9B527</accession>
<sequence length="168" mass="18161">MKVLLIQDVEHLGTAGDIKEVSGGYGRNYLLPKKLAVFATPGLIKQAEERLAKQRKLEAKQREELRGLADSINGVTLKFVTKVGEQDRLYGSVTSSDIAEKLQAAIGQEVDRRKIQLDEPIKRTGVYSIGVRLLAGLEPHINVVVEGENGEGSVQPAAEAAEVASTEA</sequence>
<keyword id="KW-0687">Ribonucleoprotein</keyword>
<keyword id="KW-0689">Ribosomal protein</keyword>
<keyword id="KW-0694">RNA-binding</keyword>
<keyword id="KW-0699">rRNA-binding</keyword>
<proteinExistence type="inferred from homology"/>